<protein>
    <recommendedName>
        <fullName evidence="1">3-isopropylmalate dehydratase large subunit</fullName>
        <ecNumber evidence="1">4.2.1.33</ecNumber>
    </recommendedName>
    <alternativeName>
        <fullName evidence="1">Alpha-IPM isomerase</fullName>
        <shortName evidence="1">IPMI</shortName>
    </alternativeName>
    <alternativeName>
        <fullName evidence="1">Isopropylmalate isomerase</fullName>
    </alternativeName>
</protein>
<evidence type="ECO:0000255" key="1">
    <source>
        <dbReference type="HAMAP-Rule" id="MF_01026"/>
    </source>
</evidence>
<proteinExistence type="inferred from homology"/>
<keyword id="KW-0004">4Fe-4S</keyword>
<keyword id="KW-0028">Amino-acid biosynthesis</keyword>
<keyword id="KW-0100">Branched-chain amino acid biosynthesis</keyword>
<keyword id="KW-0408">Iron</keyword>
<keyword id="KW-0411">Iron-sulfur</keyword>
<keyword id="KW-0432">Leucine biosynthesis</keyword>
<keyword id="KW-0456">Lyase</keyword>
<keyword id="KW-0479">Metal-binding</keyword>
<gene>
    <name evidence="1" type="primary">leuC</name>
    <name type="ordered locus">PSEEN1650</name>
</gene>
<organism>
    <name type="scientific">Pseudomonas entomophila (strain L48)</name>
    <dbReference type="NCBI Taxonomy" id="384676"/>
    <lineage>
        <taxon>Bacteria</taxon>
        <taxon>Pseudomonadati</taxon>
        <taxon>Pseudomonadota</taxon>
        <taxon>Gammaproteobacteria</taxon>
        <taxon>Pseudomonadales</taxon>
        <taxon>Pseudomonadaceae</taxon>
        <taxon>Pseudomonas</taxon>
    </lineage>
</organism>
<dbReference type="EC" id="4.2.1.33" evidence="1"/>
<dbReference type="EMBL" id="CT573326">
    <property type="protein sequence ID" value="CAK14503.1"/>
    <property type="molecule type" value="Genomic_DNA"/>
</dbReference>
<dbReference type="RefSeq" id="WP_011532913.1">
    <property type="nucleotide sequence ID" value="NC_008027.1"/>
</dbReference>
<dbReference type="SMR" id="Q1ICW0"/>
<dbReference type="STRING" id="384676.PSEEN1650"/>
<dbReference type="GeneID" id="32804894"/>
<dbReference type="KEGG" id="pen:PSEEN1650"/>
<dbReference type="eggNOG" id="COG0065">
    <property type="taxonomic scope" value="Bacteria"/>
</dbReference>
<dbReference type="HOGENOM" id="CLU_006714_3_4_6"/>
<dbReference type="OrthoDB" id="9802769at2"/>
<dbReference type="UniPathway" id="UPA00048">
    <property type="reaction ID" value="UER00071"/>
</dbReference>
<dbReference type="Proteomes" id="UP000000658">
    <property type="component" value="Chromosome"/>
</dbReference>
<dbReference type="GO" id="GO:0003861">
    <property type="term" value="F:3-isopropylmalate dehydratase activity"/>
    <property type="evidence" value="ECO:0007669"/>
    <property type="project" value="UniProtKB-UniRule"/>
</dbReference>
<dbReference type="GO" id="GO:0051539">
    <property type="term" value="F:4 iron, 4 sulfur cluster binding"/>
    <property type="evidence" value="ECO:0007669"/>
    <property type="project" value="UniProtKB-KW"/>
</dbReference>
<dbReference type="GO" id="GO:0046872">
    <property type="term" value="F:metal ion binding"/>
    <property type="evidence" value="ECO:0007669"/>
    <property type="project" value="UniProtKB-KW"/>
</dbReference>
<dbReference type="GO" id="GO:0009098">
    <property type="term" value="P:L-leucine biosynthetic process"/>
    <property type="evidence" value="ECO:0007669"/>
    <property type="project" value="UniProtKB-UniRule"/>
</dbReference>
<dbReference type="CDD" id="cd01583">
    <property type="entry name" value="IPMI"/>
    <property type="match status" value="1"/>
</dbReference>
<dbReference type="FunFam" id="3.30.499.10:FF:000007">
    <property type="entry name" value="3-isopropylmalate dehydratase large subunit"/>
    <property type="match status" value="1"/>
</dbReference>
<dbReference type="Gene3D" id="3.30.499.10">
    <property type="entry name" value="Aconitase, domain 3"/>
    <property type="match status" value="2"/>
</dbReference>
<dbReference type="HAMAP" id="MF_01026">
    <property type="entry name" value="LeuC_type1"/>
    <property type="match status" value="1"/>
</dbReference>
<dbReference type="InterPro" id="IPR004430">
    <property type="entry name" value="3-IsopropMal_deHydase_lsu"/>
</dbReference>
<dbReference type="InterPro" id="IPR015931">
    <property type="entry name" value="Acnase/IPM_dHydase_lsu_aba_1/3"/>
</dbReference>
<dbReference type="InterPro" id="IPR001030">
    <property type="entry name" value="Acoase/IPM_deHydtase_lsu_aba"/>
</dbReference>
<dbReference type="InterPro" id="IPR018136">
    <property type="entry name" value="Aconitase_4Fe-4S_BS"/>
</dbReference>
<dbReference type="InterPro" id="IPR036008">
    <property type="entry name" value="Aconitase_4Fe-4S_dom"/>
</dbReference>
<dbReference type="InterPro" id="IPR050067">
    <property type="entry name" value="IPM_dehydratase_rel_enz"/>
</dbReference>
<dbReference type="InterPro" id="IPR033941">
    <property type="entry name" value="IPMI_cat"/>
</dbReference>
<dbReference type="NCBIfam" id="TIGR00170">
    <property type="entry name" value="leuC"/>
    <property type="match status" value="1"/>
</dbReference>
<dbReference type="NCBIfam" id="NF004016">
    <property type="entry name" value="PRK05478.1"/>
    <property type="match status" value="1"/>
</dbReference>
<dbReference type="NCBIfam" id="NF009116">
    <property type="entry name" value="PRK12466.1"/>
    <property type="match status" value="1"/>
</dbReference>
<dbReference type="PANTHER" id="PTHR43822:SF9">
    <property type="entry name" value="3-ISOPROPYLMALATE DEHYDRATASE"/>
    <property type="match status" value="1"/>
</dbReference>
<dbReference type="PANTHER" id="PTHR43822">
    <property type="entry name" value="HOMOACONITASE, MITOCHONDRIAL-RELATED"/>
    <property type="match status" value="1"/>
</dbReference>
<dbReference type="Pfam" id="PF00330">
    <property type="entry name" value="Aconitase"/>
    <property type="match status" value="1"/>
</dbReference>
<dbReference type="PRINTS" id="PR00415">
    <property type="entry name" value="ACONITASE"/>
</dbReference>
<dbReference type="SUPFAM" id="SSF53732">
    <property type="entry name" value="Aconitase iron-sulfur domain"/>
    <property type="match status" value="1"/>
</dbReference>
<dbReference type="PROSITE" id="PS00450">
    <property type="entry name" value="ACONITASE_1"/>
    <property type="match status" value="1"/>
</dbReference>
<dbReference type="PROSITE" id="PS01244">
    <property type="entry name" value="ACONITASE_2"/>
    <property type="match status" value="1"/>
</dbReference>
<comment type="function">
    <text evidence="1">Catalyzes the isomerization between 2-isopropylmalate and 3-isopropylmalate, via the formation of 2-isopropylmaleate.</text>
</comment>
<comment type="catalytic activity">
    <reaction evidence="1">
        <text>(2R,3S)-3-isopropylmalate = (2S)-2-isopropylmalate</text>
        <dbReference type="Rhea" id="RHEA:32287"/>
        <dbReference type="ChEBI" id="CHEBI:1178"/>
        <dbReference type="ChEBI" id="CHEBI:35121"/>
        <dbReference type="EC" id="4.2.1.33"/>
    </reaction>
</comment>
<comment type="cofactor">
    <cofactor evidence="1">
        <name>[4Fe-4S] cluster</name>
        <dbReference type="ChEBI" id="CHEBI:49883"/>
    </cofactor>
    <text evidence="1">Binds 1 [4Fe-4S] cluster per subunit.</text>
</comment>
<comment type="pathway">
    <text evidence="1">Amino-acid biosynthesis; L-leucine biosynthesis; L-leucine from 3-methyl-2-oxobutanoate: step 2/4.</text>
</comment>
<comment type="subunit">
    <text evidence="1">Heterodimer of LeuC and LeuD.</text>
</comment>
<comment type="similarity">
    <text evidence="1">Belongs to the aconitase/IPM isomerase family. LeuC type 1 subfamily.</text>
</comment>
<accession>Q1ICW0</accession>
<feature type="chain" id="PRO_1000063592" description="3-isopropylmalate dehydratase large subunit">
    <location>
        <begin position="1"/>
        <end position="477"/>
    </location>
</feature>
<feature type="binding site" evidence="1">
    <location>
        <position position="352"/>
    </location>
    <ligand>
        <name>[4Fe-4S] cluster</name>
        <dbReference type="ChEBI" id="CHEBI:49883"/>
    </ligand>
</feature>
<feature type="binding site" evidence="1">
    <location>
        <position position="413"/>
    </location>
    <ligand>
        <name>[4Fe-4S] cluster</name>
        <dbReference type="ChEBI" id="CHEBI:49883"/>
    </ligand>
</feature>
<feature type="binding site" evidence="1">
    <location>
        <position position="416"/>
    </location>
    <ligand>
        <name>[4Fe-4S] cluster</name>
        <dbReference type="ChEBI" id="CHEBI:49883"/>
    </ligand>
</feature>
<sequence length="477" mass="51142">MAGKTLYDKLWDAHEVKRRDDGSSLIYIDRHIIHEVTSPQAFEGLRLASRKPWRIDTNIATPDHNVPTTPERKGGIEAIVDQVSRLQVQTLDENCDEYGIVEFKMNDERQGIVHVISPEQGATLPGMTVVCGDSHTSTHGAFGALAHGIGTSEVEHVLATQCLVAKKMKNMLVRVEGELPAGVTAKDIVLAVIGKIGTAGGNGHAMEFAGSAIRELSMEGRMTICNMSIEAGARVGLVAVDDTTVNYVEGRPYAPKGEQWKQAVASWKGLVSDADAVFDTLVELDAAQIKPQVSWGTSPEMVLAVDQCVPDPAAEADLIKRGSIERALKYMGLSANQAITDIKLDRVFIGSCTNSRIEDLRAAAEIAKGRKVAANVKQALVVPGSGLVKAQAEREGLDKIFLEAGFEWREPGCSMCLAMNPDRLESGEHCASTSNRNFEGRQGAGGRTHLVSPAMAAAAAVTGHFIDVRELIQGSAA</sequence>
<name>LEUC_PSEE4</name>
<reference key="1">
    <citation type="journal article" date="2006" name="Nat. Biotechnol.">
        <title>Complete genome sequence of the entomopathogenic and metabolically versatile soil bacterium Pseudomonas entomophila.</title>
        <authorList>
            <person name="Vodovar N."/>
            <person name="Vallenet D."/>
            <person name="Cruveiller S."/>
            <person name="Rouy Z."/>
            <person name="Barbe V."/>
            <person name="Acosta C."/>
            <person name="Cattolico L."/>
            <person name="Jubin C."/>
            <person name="Lajus A."/>
            <person name="Segurens B."/>
            <person name="Vacherie B."/>
            <person name="Wincker P."/>
            <person name="Weissenbach J."/>
            <person name="Lemaitre B."/>
            <person name="Medigue C."/>
            <person name="Boccard F."/>
        </authorList>
    </citation>
    <scope>NUCLEOTIDE SEQUENCE [LARGE SCALE GENOMIC DNA]</scope>
    <source>
        <strain>L48</strain>
    </source>
</reference>